<name>YBJL_ECOL5</name>
<feature type="chain" id="PRO_0000329144" description="Putative transport protein YbjL">
    <location>
        <begin position="1"/>
        <end position="561"/>
    </location>
</feature>
<feature type="transmembrane region" description="Helical" evidence="1">
    <location>
        <begin position="8"/>
        <end position="28"/>
    </location>
</feature>
<feature type="transmembrane region" description="Helical" evidence="1">
    <location>
        <begin position="32"/>
        <end position="52"/>
    </location>
</feature>
<feature type="transmembrane region" description="Helical" evidence="1">
    <location>
        <begin position="66"/>
        <end position="86"/>
    </location>
</feature>
<feature type="transmembrane region" description="Helical" evidence="1">
    <location>
        <begin position="94"/>
        <end position="114"/>
    </location>
</feature>
<feature type="transmembrane region" description="Helical" evidence="1">
    <location>
        <begin position="158"/>
        <end position="178"/>
    </location>
</feature>
<feature type="transmembrane region" description="Helical" evidence="1">
    <location>
        <begin position="383"/>
        <end position="403"/>
    </location>
</feature>
<feature type="transmembrane region" description="Helical" evidence="1">
    <location>
        <begin position="406"/>
        <end position="426"/>
    </location>
</feature>
<feature type="transmembrane region" description="Helical" evidence="1">
    <location>
        <begin position="451"/>
        <end position="471"/>
    </location>
</feature>
<feature type="transmembrane region" description="Helical" evidence="1">
    <location>
        <begin position="475"/>
        <end position="495"/>
    </location>
</feature>
<feature type="transmembrane region" description="Helical" evidence="1">
    <location>
        <begin position="540"/>
        <end position="560"/>
    </location>
</feature>
<feature type="domain" description="RCK C-terminal 1" evidence="1">
    <location>
        <begin position="200"/>
        <end position="288"/>
    </location>
</feature>
<feature type="domain" description="RCK C-terminal 2" evidence="1">
    <location>
        <begin position="292"/>
        <end position="373"/>
    </location>
</feature>
<accession>Q0TJK1</accession>
<protein>
    <recommendedName>
        <fullName evidence="1">Putative transport protein YbjL</fullName>
    </recommendedName>
</protein>
<comment type="subcellular location">
    <subcellularLocation>
        <location evidence="1">Cell membrane</location>
        <topology evidence="1">Multi-pass membrane protein</topology>
    </subcellularLocation>
</comment>
<comment type="similarity">
    <text evidence="1">Belongs to the AAE transporter (TC 2.A.81) family. YbjL subfamily.</text>
</comment>
<keyword id="KW-1003">Cell membrane</keyword>
<keyword id="KW-0472">Membrane</keyword>
<keyword id="KW-0677">Repeat</keyword>
<keyword id="KW-0812">Transmembrane</keyword>
<keyword id="KW-1133">Transmembrane helix</keyword>
<keyword id="KW-0813">Transport</keyword>
<gene>
    <name evidence="1" type="primary">ybjL</name>
    <name type="ordered locus">ECP_0861</name>
</gene>
<evidence type="ECO:0000255" key="1">
    <source>
        <dbReference type="HAMAP-Rule" id="MF_01015"/>
    </source>
</evidence>
<dbReference type="EMBL" id="CP000247">
    <property type="protein sequence ID" value="ABG68878.1"/>
    <property type="molecule type" value="Genomic_DNA"/>
</dbReference>
<dbReference type="RefSeq" id="WP_001024876.1">
    <property type="nucleotide sequence ID" value="NC_008253.1"/>
</dbReference>
<dbReference type="SMR" id="Q0TJK1"/>
<dbReference type="KEGG" id="ecp:ECP_0861"/>
<dbReference type="HOGENOM" id="CLU_035023_2_2_6"/>
<dbReference type="Proteomes" id="UP000009182">
    <property type="component" value="Chromosome"/>
</dbReference>
<dbReference type="GO" id="GO:0005886">
    <property type="term" value="C:plasma membrane"/>
    <property type="evidence" value="ECO:0007669"/>
    <property type="project" value="UniProtKB-SubCell"/>
</dbReference>
<dbReference type="GO" id="GO:0008324">
    <property type="term" value="F:monoatomic cation transmembrane transporter activity"/>
    <property type="evidence" value="ECO:0007669"/>
    <property type="project" value="InterPro"/>
</dbReference>
<dbReference type="GO" id="GO:0006813">
    <property type="term" value="P:potassium ion transport"/>
    <property type="evidence" value="ECO:0007669"/>
    <property type="project" value="InterPro"/>
</dbReference>
<dbReference type="FunFam" id="3.30.70.1450:FF:000003">
    <property type="entry name" value="Putative transport protein YbjL"/>
    <property type="match status" value="1"/>
</dbReference>
<dbReference type="Gene3D" id="3.30.70.1450">
    <property type="entry name" value="Regulator of K+ conductance, C-terminal domain"/>
    <property type="match status" value="2"/>
</dbReference>
<dbReference type="HAMAP" id="MF_01015">
    <property type="entry name" value="YbjL"/>
    <property type="match status" value="1"/>
</dbReference>
<dbReference type="InterPro" id="IPR050144">
    <property type="entry name" value="AAE_transporter"/>
</dbReference>
<dbReference type="InterPro" id="IPR006037">
    <property type="entry name" value="RCK_C"/>
</dbReference>
<dbReference type="InterPro" id="IPR036721">
    <property type="entry name" value="RCK_C_sf"/>
</dbReference>
<dbReference type="InterPro" id="IPR023017">
    <property type="entry name" value="Transp_YbjL_put"/>
</dbReference>
<dbReference type="InterPro" id="IPR006512">
    <property type="entry name" value="YidE_YbjL"/>
</dbReference>
<dbReference type="NCBIfam" id="NF003440">
    <property type="entry name" value="PRK04972.1"/>
    <property type="match status" value="1"/>
</dbReference>
<dbReference type="NCBIfam" id="TIGR01625">
    <property type="entry name" value="YidE_YbjL_dupl"/>
    <property type="match status" value="2"/>
</dbReference>
<dbReference type="PANTHER" id="PTHR30445">
    <property type="entry name" value="K(+)_H(+) ANTIPORTER SUBUNIT KHTT"/>
    <property type="match status" value="1"/>
</dbReference>
<dbReference type="PANTHER" id="PTHR30445:SF10">
    <property type="entry name" value="TRANSPORT PROTEIN YBJL-RELATED"/>
    <property type="match status" value="1"/>
</dbReference>
<dbReference type="Pfam" id="PF06826">
    <property type="entry name" value="Asp-Al_Ex"/>
    <property type="match status" value="2"/>
</dbReference>
<dbReference type="Pfam" id="PF02080">
    <property type="entry name" value="TrkA_C"/>
    <property type="match status" value="2"/>
</dbReference>
<dbReference type="SUPFAM" id="SSF116726">
    <property type="entry name" value="TrkA C-terminal domain-like"/>
    <property type="match status" value="2"/>
</dbReference>
<dbReference type="PROSITE" id="PS51202">
    <property type="entry name" value="RCK_C"/>
    <property type="match status" value="2"/>
</dbReference>
<reference key="1">
    <citation type="journal article" date="2006" name="Mol. Microbiol.">
        <title>Role of pathogenicity island-associated integrases in the genome plasticity of uropathogenic Escherichia coli strain 536.</title>
        <authorList>
            <person name="Hochhut B."/>
            <person name="Wilde C."/>
            <person name="Balling G."/>
            <person name="Middendorf B."/>
            <person name="Dobrindt U."/>
            <person name="Brzuszkiewicz E."/>
            <person name="Gottschalk G."/>
            <person name="Carniel E."/>
            <person name="Hacker J."/>
        </authorList>
    </citation>
    <scope>NUCLEOTIDE SEQUENCE [LARGE SCALE GENOMIC DNA]</scope>
    <source>
        <strain>536 / UPEC</strain>
    </source>
</reference>
<proteinExistence type="inferred from homology"/>
<organism>
    <name type="scientific">Escherichia coli O6:K15:H31 (strain 536 / UPEC)</name>
    <dbReference type="NCBI Taxonomy" id="362663"/>
    <lineage>
        <taxon>Bacteria</taxon>
        <taxon>Pseudomonadati</taxon>
        <taxon>Pseudomonadota</taxon>
        <taxon>Gammaproteobacteria</taxon>
        <taxon>Enterobacterales</taxon>
        <taxon>Enterobacteriaceae</taxon>
        <taxon>Escherichia</taxon>
    </lineage>
</organism>
<sequence>MNINVAELLNGNYILLLFVVLALGLCLGKLRLGSIQLGNSIGVLVVSLLLGQQHFSINTDALNLGFMLFIFCVGVEAGPNFFSIFFRDGKNYLMLALVMVGSALVIALGLGKLFGWDIGLTAGMLAGSMTSTPVLVGAGDTLRHSGMESRQLSLALDNLSLGYALTYLIGLVSLIVGARYLPKLQHQDLQTSAQQIARERGLDTDANRKVYLPVIRAYRVGPELVAWTDGKNLRELGIYRQTGCYIERIRRNGILANPDGDAVLQMGDEIALVGYPDAHARLDPSFRNGKEVFDRDLLDMRIVTEEVVVKNHNAVGKRLAQLKLTDHGCFLNRVIRSQIEMPIDDNVVLNKGDVLQVSGDARRVKTIADRIGFISIHSQVTDLLAFCAFFVIGLMIGMITFQFSTFSFGMGNAAGLLFAGIMLGFMRANHPTFGYIPQGALSMVKEFGLMVFMAGVGLSAGSGINNGLGAIGGQMLIAGLIVSLVPVVICFLFGAYVLRMNRALLFGAMMGARTCAPAMEIISDTARSNIPALGYAGTYAIANVLLTLAGTIIVMVWPGLG</sequence>